<reference key="1">
    <citation type="journal article" date="2001" name="Science">
        <title>Complete genome sequence of a virulent isolate of Streptococcus pneumoniae.</title>
        <authorList>
            <person name="Tettelin H."/>
            <person name="Nelson K.E."/>
            <person name="Paulsen I.T."/>
            <person name="Eisen J.A."/>
            <person name="Read T.D."/>
            <person name="Peterson S.N."/>
            <person name="Heidelberg J.F."/>
            <person name="DeBoy R.T."/>
            <person name="Haft D.H."/>
            <person name="Dodson R.J."/>
            <person name="Durkin A.S."/>
            <person name="Gwinn M.L."/>
            <person name="Kolonay J.F."/>
            <person name="Nelson W.C."/>
            <person name="Peterson J.D."/>
            <person name="Umayam L.A."/>
            <person name="White O."/>
            <person name="Salzberg S.L."/>
            <person name="Lewis M.R."/>
            <person name="Radune D."/>
            <person name="Holtzapple E.K."/>
            <person name="Khouri H.M."/>
            <person name="Wolf A.M."/>
            <person name="Utterback T.R."/>
            <person name="Hansen C.L."/>
            <person name="McDonald L.A."/>
            <person name="Feldblyum T.V."/>
            <person name="Angiuoli S.V."/>
            <person name="Dickinson T."/>
            <person name="Hickey E.K."/>
            <person name="Holt I.E."/>
            <person name="Loftus B.J."/>
            <person name="Yang F."/>
            <person name="Smith H.O."/>
            <person name="Venter J.C."/>
            <person name="Dougherty B.A."/>
            <person name="Morrison D.A."/>
            <person name="Hollingshead S.K."/>
            <person name="Fraser C.M."/>
        </authorList>
    </citation>
    <scope>NUCLEOTIDE SEQUENCE [LARGE SCALE GENOMIC DNA]</scope>
    <source>
        <strain>ATCC BAA-334 / TIGR4</strain>
    </source>
</reference>
<reference key="2">
    <citation type="journal article" date="2004" name="J. Biol. Chem.">
        <title>Identification and characterization of the first class of potent bacterial acetyl-CoA carboxylase inhibitors with antibacterial activity.</title>
        <authorList>
            <person name="Freiberg C."/>
            <person name="Brunner N.A."/>
            <person name="Schiffer G."/>
            <person name="Lampe T."/>
            <person name="Pohlmann J."/>
            <person name="Brands M."/>
            <person name="Raabe M."/>
            <person name="Haebich D."/>
            <person name="Ziegelbauer K."/>
        </authorList>
    </citation>
    <scope>CHARACTERIZATION OF ACTIVITY REGULATION</scope>
    <source>
        <strain>G9A</strain>
    </source>
</reference>
<comment type="function">
    <text evidence="1">Component of the acetyl coenzyme A carboxylase (ACC) complex. Biotin carboxylase (BC) catalyzes the carboxylation of biotin on its carrier protein (BCCP) and then the CO(2) group is transferred by the transcarboxylase to acetyl-CoA to form malonyl-CoA.</text>
</comment>
<comment type="catalytic activity">
    <reaction evidence="1">
        <text>N(6)-carboxybiotinyl-L-lysyl-[protein] + acetyl-CoA = N(6)-biotinyl-L-lysyl-[protein] + malonyl-CoA</text>
        <dbReference type="Rhea" id="RHEA:54728"/>
        <dbReference type="Rhea" id="RHEA-COMP:10505"/>
        <dbReference type="Rhea" id="RHEA-COMP:10506"/>
        <dbReference type="ChEBI" id="CHEBI:57288"/>
        <dbReference type="ChEBI" id="CHEBI:57384"/>
        <dbReference type="ChEBI" id="CHEBI:83144"/>
        <dbReference type="ChEBI" id="CHEBI:83145"/>
        <dbReference type="EC" id="2.1.3.15"/>
    </reaction>
</comment>
<comment type="cofactor">
    <cofactor evidence="1">
        <name>Zn(2+)</name>
        <dbReference type="ChEBI" id="CHEBI:29105"/>
    </cofactor>
    <text evidence="1">Binds 1 zinc ion per subunit.</text>
</comment>
<comment type="pathway">
    <text evidence="1">Lipid metabolism; malonyl-CoA biosynthesis; malonyl-CoA from acetyl-CoA: step 1/1.</text>
</comment>
<comment type="subunit">
    <text evidence="1">Acetyl-CoA carboxylase is a heterohexamer composed of biotin carboxyl carrier protein (AccB), biotin carboxylase (AccC) and two subunits each of ACCase subunit alpha (AccA) and ACCase subunit beta (AccD).</text>
</comment>
<comment type="subcellular location">
    <subcellularLocation>
        <location evidence="3">Cytoplasm</location>
    </subcellularLocation>
</comment>
<comment type="similarity">
    <text evidence="1">Belongs to the AccD/PCCB family.</text>
</comment>
<organism>
    <name type="scientific">Streptococcus pneumoniae serotype 4 (strain ATCC BAA-334 / TIGR4)</name>
    <dbReference type="NCBI Taxonomy" id="170187"/>
    <lineage>
        <taxon>Bacteria</taxon>
        <taxon>Bacillati</taxon>
        <taxon>Bacillota</taxon>
        <taxon>Bacilli</taxon>
        <taxon>Lactobacillales</taxon>
        <taxon>Streptococcaceae</taxon>
        <taxon>Streptococcus</taxon>
    </lineage>
</organism>
<proteinExistence type="evidence at protein level"/>
<name>ACCD_STRPN</name>
<keyword id="KW-0067">ATP-binding</keyword>
<keyword id="KW-0963">Cytoplasm</keyword>
<keyword id="KW-0275">Fatty acid biosynthesis</keyword>
<keyword id="KW-0276">Fatty acid metabolism</keyword>
<keyword id="KW-0444">Lipid biosynthesis</keyword>
<keyword id="KW-0443">Lipid metabolism</keyword>
<keyword id="KW-0479">Metal-binding</keyword>
<keyword id="KW-0547">Nucleotide-binding</keyword>
<keyword id="KW-1185">Reference proteome</keyword>
<keyword id="KW-0808">Transferase</keyword>
<keyword id="KW-0862">Zinc</keyword>
<keyword id="KW-0863">Zinc-finger</keyword>
<dbReference type="EC" id="2.1.3.15" evidence="1"/>
<dbReference type="EMBL" id="AE005672">
    <property type="protein sequence ID" value="AAK74589.1"/>
    <property type="molecule type" value="Genomic_DNA"/>
</dbReference>
<dbReference type="PIR" id="B97920">
    <property type="entry name" value="B97920"/>
</dbReference>
<dbReference type="PIR" id="D95049">
    <property type="entry name" value="D95049"/>
</dbReference>
<dbReference type="RefSeq" id="WP_001173353.1">
    <property type="nucleotide sequence ID" value="NZ_CP155539.1"/>
</dbReference>
<dbReference type="SMR" id="P0CC08"/>
<dbReference type="PaxDb" id="170187-SP_0426"/>
<dbReference type="EnsemblBacteria" id="AAK74589">
    <property type="protein sequence ID" value="AAK74589"/>
    <property type="gene ID" value="SP_0426"/>
</dbReference>
<dbReference type="KEGG" id="spn:SP_0426"/>
<dbReference type="eggNOG" id="COG0777">
    <property type="taxonomic scope" value="Bacteria"/>
</dbReference>
<dbReference type="PhylomeDB" id="P0CC08"/>
<dbReference type="BioCyc" id="SPNE170187:G1FZB-441-MONOMER"/>
<dbReference type="UniPathway" id="UPA00655">
    <property type="reaction ID" value="UER00711"/>
</dbReference>
<dbReference type="Proteomes" id="UP000000585">
    <property type="component" value="Chromosome"/>
</dbReference>
<dbReference type="GO" id="GO:0009317">
    <property type="term" value="C:acetyl-CoA carboxylase complex"/>
    <property type="evidence" value="ECO:0007669"/>
    <property type="project" value="InterPro"/>
</dbReference>
<dbReference type="GO" id="GO:0003989">
    <property type="term" value="F:acetyl-CoA carboxylase activity"/>
    <property type="evidence" value="ECO:0007669"/>
    <property type="project" value="InterPro"/>
</dbReference>
<dbReference type="GO" id="GO:0005524">
    <property type="term" value="F:ATP binding"/>
    <property type="evidence" value="ECO:0007669"/>
    <property type="project" value="UniProtKB-KW"/>
</dbReference>
<dbReference type="GO" id="GO:0016743">
    <property type="term" value="F:carboxyl- or carbamoyltransferase activity"/>
    <property type="evidence" value="ECO:0007669"/>
    <property type="project" value="UniProtKB-UniRule"/>
</dbReference>
<dbReference type="GO" id="GO:0008270">
    <property type="term" value="F:zinc ion binding"/>
    <property type="evidence" value="ECO:0007669"/>
    <property type="project" value="UniProtKB-UniRule"/>
</dbReference>
<dbReference type="GO" id="GO:0006633">
    <property type="term" value="P:fatty acid biosynthetic process"/>
    <property type="evidence" value="ECO:0007669"/>
    <property type="project" value="UniProtKB-KW"/>
</dbReference>
<dbReference type="GO" id="GO:2001295">
    <property type="term" value="P:malonyl-CoA biosynthetic process"/>
    <property type="evidence" value="ECO:0007669"/>
    <property type="project" value="UniProtKB-UniRule"/>
</dbReference>
<dbReference type="Gene3D" id="3.90.226.10">
    <property type="entry name" value="2-enoyl-CoA Hydratase, Chain A, domain 1"/>
    <property type="match status" value="1"/>
</dbReference>
<dbReference type="HAMAP" id="MF_01395">
    <property type="entry name" value="AcetylCoA_CT_beta"/>
    <property type="match status" value="1"/>
</dbReference>
<dbReference type="InterPro" id="IPR034733">
    <property type="entry name" value="AcCoA_carboxyl_beta"/>
</dbReference>
<dbReference type="InterPro" id="IPR000438">
    <property type="entry name" value="Acetyl_CoA_COase_Trfase_b_su"/>
</dbReference>
<dbReference type="InterPro" id="IPR029045">
    <property type="entry name" value="ClpP/crotonase-like_dom_sf"/>
</dbReference>
<dbReference type="InterPro" id="IPR011762">
    <property type="entry name" value="COA_CT_N"/>
</dbReference>
<dbReference type="NCBIfam" id="TIGR00515">
    <property type="entry name" value="accD"/>
    <property type="match status" value="1"/>
</dbReference>
<dbReference type="PANTHER" id="PTHR42995">
    <property type="entry name" value="ACETYL-COENZYME A CARBOXYLASE CARBOXYL TRANSFERASE SUBUNIT BETA, CHLOROPLASTIC"/>
    <property type="match status" value="1"/>
</dbReference>
<dbReference type="PANTHER" id="PTHR42995:SF5">
    <property type="entry name" value="ACETYL-COENZYME A CARBOXYLASE CARBOXYL TRANSFERASE SUBUNIT BETA, CHLOROPLASTIC"/>
    <property type="match status" value="1"/>
</dbReference>
<dbReference type="Pfam" id="PF01039">
    <property type="entry name" value="Carboxyl_trans"/>
    <property type="match status" value="1"/>
</dbReference>
<dbReference type="PRINTS" id="PR01070">
    <property type="entry name" value="ACCCTRFRASEB"/>
</dbReference>
<dbReference type="SUPFAM" id="SSF52096">
    <property type="entry name" value="ClpP/crotonase"/>
    <property type="match status" value="1"/>
</dbReference>
<dbReference type="PROSITE" id="PS50980">
    <property type="entry name" value="COA_CT_NTER"/>
    <property type="match status" value="1"/>
</dbReference>
<feature type="chain" id="PRO_0000389871" description="Acetyl-coenzyme A carboxylase carboxyl transferase subunit beta">
    <location>
        <begin position="1"/>
        <end position="288"/>
    </location>
</feature>
<feature type="domain" description="CoA carboxyltransferase N-terminal" evidence="2">
    <location>
        <begin position="33"/>
        <end position="288"/>
    </location>
</feature>
<feature type="zinc finger region" description="C4-type" evidence="1">
    <location>
        <begin position="37"/>
        <end position="58"/>
    </location>
</feature>
<feature type="binding site" evidence="1">
    <location>
        <position position="37"/>
    </location>
    <ligand>
        <name>Zn(2+)</name>
        <dbReference type="ChEBI" id="CHEBI:29105"/>
    </ligand>
</feature>
<feature type="binding site" evidence="1">
    <location>
        <position position="40"/>
    </location>
    <ligand>
        <name>Zn(2+)</name>
        <dbReference type="ChEBI" id="CHEBI:29105"/>
    </ligand>
</feature>
<feature type="binding site" evidence="1">
    <location>
        <position position="55"/>
    </location>
    <ligand>
        <name>Zn(2+)</name>
        <dbReference type="ChEBI" id="CHEBI:29105"/>
    </ligand>
</feature>
<feature type="binding site" evidence="1">
    <location>
        <position position="58"/>
    </location>
    <ligand>
        <name>Zn(2+)</name>
        <dbReference type="ChEBI" id="CHEBI:29105"/>
    </ligand>
</feature>
<gene>
    <name evidence="1" type="primary">accD</name>
    <name type="ordered locus">SP_0426</name>
</gene>
<evidence type="ECO:0000255" key="1">
    <source>
        <dbReference type="HAMAP-Rule" id="MF_01395"/>
    </source>
</evidence>
<evidence type="ECO:0000255" key="2">
    <source>
        <dbReference type="PROSITE-ProRule" id="PRU01136"/>
    </source>
</evidence>
<evidence type="ECO:0000305" key="3"/>
<accession>P0CC08</accession>
<accession>Q7D4F5</accession>
<accession>Q9FBB8</accession>
<protein>
    <recommendedName>
        <fullName evidence="1">Acetyl-coenzyme A carboxylase carboxyl transferase subunit beta</fullName>
        <shortName evidence="1">ACCase subunit beta</shortName>
        <shortName evidence="1">Acetyl-CoA carboxylase carboxyltransferase subunit beta</shortName>
        <ecNumber evidence="1">2.1.3.15</ecNumber>
    </recommendedName>
</protein>
<sequence>MALFSKKDKYIRINPNRSVREKPQAKPEVPDELFSQCPGCKHTIYQKDLGSERICPHCSYTFRISAQERLALTIDMGTFKELFTGIESKDPLHFPGYQKKLASMREKTGLHEAVVTGTALIKGQTVALGIMDSNFIMASMGTVVGEKITRLFEYATVEKLPVVLFTASGGARMQEGIMSLMQMAKISAAVKRHSNAGLFYLTILTDPTTGGVTASFAMEGDIILAEPQSLVGFAGRRVIENTVRESLPEDFQKAEFLLEHGFVDAIVKRRDLPDTIASLVRLHGGSPR</sequence>